<keyword id="KW-0997">Cell inner membrane</keyword>
<keyword id="KW-1003">Cell membrane</keyword>
<keyword id="KW-0444">Lipid biosynthesis</keyword>
<keyword id="KW-0443">Lipid metabolism</keyword>
<keyword id="KW-0464">Manganese</keyword>
<keyword id="KW-0472">Membrane</keyword>
<keyword id="KW-0594">Phospholipid biosynthesis</keyword>
<keyword id="KW-1208">Phospholipid metabolism</keyword>
<keyword id="KW-1185">Reference proteome</keyword>
<keyword id="KW-0808">Transferase</keyword>
<keyword id="KW-0812">Transmembrane</keyword>
<keyword id="KW-1133">Transmembrane helix</keyword>
<dbReference type="EC" id="2.7.8.24" evidence="3 4 5"/>
<dbReference type="EMBL" id="AE007869">
    <property type="protein sequence ID" value="AAK87563.2"/>
    <property type="molecule type" value="Genomic_DNA"/>
</dbReference>
<dbReference type="RefSeq" id="NP_354778.2">
    <property type="nucleotide sequence ID" value="NC_003062.2"/>
</dbReference>
<dbReference type="RefSeq" id="WP_010971870.1">
    <property type="nucleotide sequence ID" value="NC_003062.2"/>
</dbReference>
<dbReference type="SMR" id="A9CIM3"/>
<dbReference type="MINT" id="A9CIM3"/>
<dbReference type="STRING" id="176299.Atu1793"/>
<dbReference type="EnsemblBacteria" id="AAK87563">
    <property type="protein sequence ID" value="AAK87563"/>
    <property type="gene ID" value="Atu1793"/>
</dbReference>
<dbReference type="GeneID" id="1133831"/>
<dbReference type="KEGG" id="atu:Atu1793"/>
<dbReference type="PATRIC" id="fig|176299.10.peg.1809"/>
<dbReference type="eggNOG" id="COG1183">
    <property type="taxonomic scope" value="Bacteria"/>
</dbReference>
<dbReference type="HOGENOM" id="CLU_086279_0_0_5"/>
<dbReference type="OrthoDB" id="350520at2"/>
<dbReference type="PhylomeDB" id="A9CIM3"/>
<dbReference type="BRENDA" id="2.7.8.24">
    <property type="organism ID" value="200"/>
</dbReference>
<dbReference type="PRO" id="PR:A9CIM3"/>
<dbReference type="Proteomes" id="UP000000813">
    <property type="component" value="Chromosome circular"/>
</dbReference>
<dbReference type="GO" id="GO:0005886">
    <property type="term" value="C:plasma membrane"/>
    <property type="evidence" value="ECO:0007669"/>
    <property type="project" value="UniProtKB-SubCell"/>
</dbReference>
<dbReference type="GO" id="GO:0042802">
    <property type="term" value="F:identical protein binding"/>
    <property type="evidence" value="ECO:0000353"/>
    <property type="project" value="IntAct"/>
</dbReference>
<dbReference type="GO" id="GO:0050520">
    <property type="term" value="F:phosphatidylcholine synthase activity"/>
    <property type="evidence" value="ECO:0000314"/>
    <property type="project" value="UniProtKB"/>
</dbReference>
<dbReference type="GO" id="GO:0008654">
    <property type="term" value="P:phospholipid biosynthetic process"/>
    <property type="evidence" value="ECO:0000314"/>
    <property type="project" value="UniProtKB"/>
</dbReference>
<dbReference type="FunFam" id="1.20.120.1760:FF:000009">
    <property type="entry name" value="Phosphatidylcholine synthase"/>
    <property type="match status" value="1"/>
</dbReference>
<dbReference type="Gene3D" id="1.20.120.1760">
    <property type="match status" value="1"/>
</dbReference>
<dbReference type="InterPro" id="IPR043130">
    <property type="entry name" value="CDP-OH_PTrfase_TM_dom"/>
</dbReference>
<dbReference type="InterPro" id="IPR026027">
    <property type="entry name" value="PcS"/>
</dbReference>
<dbReference type="NCBIfam" id="NF045884">
    <property type="entry name" value="PhCholSynAgro"/>
    <property type="match status" value="1"/>
</dbReference>
<dbReference type="PIRSF" id="PIRSF000851">
    <property type="entry name" value="PcS"/>
    <property type="match status" value="1"/>
</dbReference>
<gene>
    <name evidence="10" type="primary">pcs</name>
    <name type="ordered locus">Atu1793</name>
</gene>
<accession>A9CIM3</accession>
<name>PCS_AGRFC</name>
<comment type="function">
    <text evidence="3 4 5">Condenses choline with CDP-diglyceride to produce phosphatidylcholine and CMP. Affects motility, biofilm formation and virulence of this bacterium when there is a complete loss of phosphatidylcholine formation due to absence of both the synthase (pcs) and the methylation (pmtA) pathways.</text>
</comment>
<comment type="catalytic activity">
    <reaction evidence="3 4 5">
        <text>a CDP-1,2-diacyl-sn-glycerol + choline = a 1,2-diacyl-sn-glycero-3-phosphocholine + CMP + H(+)</text>
        <dbReference type="Rhea" id="RHEA:14597"/>
        <dbReference type="ChEBI" id="CHEBI:15354"/>
        <dbReference type="ChEBI" id="CHEBI:15378"/>
        <dbReference type="ChEBI" id="CHEBI:57643"/>
        <dbReference type="ChEBI" id="CHEBI:58332"/>
        <dbReference type="ChEBI" id="CHEBI:60377"/>
        <dbReference type="EC" id="2.7.8.24"/>
    </reaction>
</comment>
<comment type="cofactor">
    <cofactor evidence="1">
        <name>Mn(2+)</name>
        <dbReference type="ChEBI" id="CHEBI:29035"/>
    </cofactor>
</comment>
<comment type="interaction">
    <interactant intactId="EBI-9549403">
        <id>A9CIM3</id>
    </interactant>
    <interactant intactId="EBI-9549403">
        <id>A9CIM3</id>
        <label>pcs</label>
    </interactant>
    <organismsDiffer>false</organismsDiffer>
    <experiments>3</experiments>
</comment>
<comment type="subcellular location">
    <subcellularLocation>
        <location evidence="1">Cell inner membrane</location>
        <topology evidence="1">Multi-pass membrane protein</topology>
    </subcellularLocation>
</comment>
<comment type="similarity">
    <text evidence="2">Belongs to the CDP-alcohol phosphatidyltransferase class-I family.</text>
</comment>
<organism>
    <name type="scientific">Agrobacterium fabrum (strain C58 / ATCC 33970)</name>
    <name type="common">Agrobacterium tumefaciens (strain C58)</name>
    <dbReference type="NCBI Taxonomy" id="176299"/>
    <lineage>
        <taxon>Bacteria</taxon>
        <taxon>Pseudomonadati</taxon>
        <taxon>Pseudomonadota</taxon>
        <taxon>Alphaproteobacteria</taxon>
        <taxon>Hyphomicrobiales</taxon>
        <taxon>Rhizobiaceae</taxon>
        <taxon>Rhizobium/Agrobacterium group</taxon>
        <taxon>Agrobacterium</taxon>
        <taxon>Agrobacterium tumefaciens complex</taxon>
    </lineage>
</organism>
<proteinExistence type="evidence at protein level"/>
<sequence length="241" mass="26756">MKIFNYKRVPYAEIRAFSVHILTASGSFLAFLGVVAASEHRFVDMFWWLGLALLVDGIDGPIARKVRVKEVLPNWSGDTLDNIIDYVTYVLLPAFALYQSGMIGEPLSFVAAGMIVVSSAIYYADMGMKTDEYFFSGFPVVWNMVVFTLFVMDASATTAMTVVTVSVFLTFLPINFLHPVRVKRLRPLNLLVVAIWCALGGYALLMHFETPTWAVIAFVASGIYLYCIGGILQFFPSLGAK</sequence>
<protein>
    <recommendedName>
        <fullName evidence="6 10">Phosphatidylcholine synthase</fullName>
        <shortName evidence="7 8">PC synthase</shortName>
        <shortName evidence="6 7 8">PCS</shortName>
        <ecNumber evidence="3 4 5">2.7.8.24</ecNumber>
    </recommendedName>
    <alternativeName>
        <fullName evidence="1">CDP-diglyceride-choline O-phosphatidyltransferase</fullName>
    </alternativeName>
</protein>
<reference evidence="10" key="1">
    <citation type="journal article" date="2001" name="Science">
        <title>The genome of the natural genetic engineer Agrobacterium tumefaciens C58.</title>
        <authorList>
            <person name="Wood D.W."/>
            <person name="Setubal J.C."/>
            <person name="Kaul R."/>
            <person name="Monks D.E."/>
            <person name="Kitajima J.P."/>
            <person name="Okura V.K."/>
            <person name="Zhou Y."/>
            <person name="Chen L."/>
            <person name="Wood G.E."/>
            <person name="Almeida N.F. Jr."/>
            <person name="Woo L."/>
            <person name="Chen Y."/>
            <person name="Paulsen I.T."/>
            <person name="Eisen J.A."/>
            <person name="Karp P.D."/>
            <person name="Bovee D. Sr."/>
            <person name="Chapman P."/>
            <person name="Clendenning J."/>
            <person name="Deatherage G."/>
            <person name="Gillet W."/>
            <person name="Grant C."/>
            <person name="Kutyavin T."/>
            <person name="Levy R."/>
            <person name="Li M.-J."/>
            <person name="McClelland E."/>
            <person name="Palmieri A."/>
            <person name="Raymond C."/>
            <person name="Rouse G."/>
            <person name="Saenphimmachak C."/>
            <person name="Wu Z."/>
            <person name="Romero P."/>
            <person name="Gordon D."/>
            <person name="Zhang S."/>
            <person name="Yoo H."/>
            <person name="Tao Y."/>
            <person name="Biddle P."/>
            <person name="Jung M."/>
            <person name="Krespan W."/>
            <person name="Perry M."/>
            <person name="Gordon-Kamm B."/>
            <person name="Liao L."/>
            <person name="Kim S."/>
            <person name="Hendrick C."/>
            <person name="Zhao Z.-Y."/>
            <person name="Dolan M."/>
            <person name="Chumley F."/>
            <person name="Tingey S.V."/>
            <person name="Tomb J.-F."/>
            <person name="Gordon M.P."/>
            <person name="Olson M.V."/>
            <person name="Nester E.W."/>
        </authorList>
    </citation>
    <scope>NUCLEOTIDE SEQUENCE [LARGE SCALE GENOMIC DNA]</scope>
    <source>
        <strain>C58 / ATCC 33970</strain>
    </source>
</reference>
<reference evidence="10" key="2">
    <citation type="journal article" date="2001" name="Science">
        <title>Genome sequence of the plant pathogen and biotechnology agent Agrobacterium tumefaciens C58.</title>
        <authorList>
            <person name="Goodner B."/>
            <person name="Hinkle G."/>
            <person name="Gattung S."/>
            <person name="Miller N."/>
            <person name="Blanchard M."/>
            <person name="Qurollo B."/>
            <person name="Goldman B.S."/>
            <person name="Cao Y."/>
            <person name="Askenazi M."/>
            <person name="Halling C."/>
            <person name="Mullin L."/>
            <person name="Houmiel K."/>
            <person name="Gordon J."/>
            <person name="Vaudin M."/>
            <person name="Iartchouk O."/>
            <person name="Epp A."/>
            <person name="Liu F."/>
            <person name="Wollam C."/>
            <person name="Allinger M."/>
            <person name="Doughty D."/>
            <person name="Scott C."/>
            <person name="Lappas C."/>
            <person name="Markelz B."/>
            <person name="Flanagan C."/>
            <person name="Crowell C."/>
            <person name="Gurson J."/>
            <person name="Lomo C."/>
            <person name="Sear C."/>
            <person name="Strub G."/>
            <person name="Cielo C."/>
            <person name="Slater S."/>
        </authorList>
    </citation>
    <scope>NUCLEOTIDE SEQUENCE [LARGE SCALE GENOMIC DNA]</scope>
    <source>
        <strain>C58 / ATCC 33970</strain>
    </source>
</reference>
<reference evidence="9" key="3">
    <citation type="journal article" date="2003" name="Microbiology">
        <title>Pathways for phosphatidylcholine biosynthesis in bacteria.</title>
        <authorList>
            <person name="Martinez-Morales F."/>
            <person name="Schobert M."/>
            <person name="Lopez-Lara I.M."/>
            <person name="Geiger O."/>
        </authorList>
    </citation>
    <scope>FUNCTION</scope>
    <scope>CATALYTIC ACTIVITY</scope>
    <source>
        <strain evidence="3">C58 / ATCC 33970</strain>
    </source>
</reference>
<reference evidence="9" key="4">
    <citation type="journal article" date="2006" name="Mol. Microbiol.">
        <title>Virulence of Agrobacterium tumefaciens requires phosphatidylcholine in the bacterial membrane.</title>
        <authorList>
            <person name="Wessel M."/>
            <person name="Klusener S."/>
            <person name="Godeke J."/>
            <person name="Fritz C."/>
            <person name="Hacker S."/>
            <person name="Narberhaus F."/>
        </authorList>
    </citation>
    <scope>FUNCTION</scope>
    <scope>CATALYTIC ACTIVITY</scope>
    <source>
        <strain evidence="4">C58 / ATCC 33970</strain>
    </source>
</reference>
<reference evidence="9" key="5">
    <citation type="journal article" date="2009" name="J. Bacteriol.">
        <title>Expression and physiological relevance of Agrobacterium tumefaciens phosphatidylcholine biosynthesis genes.</title>
        <authorList>
            <person name="Klusener S."/>
            <person name="Aktas M."/>
            <person name="Thormann K.M."/>
            <person name="Wessel M."/>
            <person name="Narberhaus F."/>
        </authorList>
    </citation>
    <scope>FUNCTION</scope>
    <scope>CATALYTIC ACTIVITY</scope>
    <source>
        <strain evidence="5">C58 / ATCC 33970</strain>
    </source>
</reference>
<feature type="chain" id="PRO_0000425216" description="Phosphatidylcholine synthase">
    <location>
        <begin position="1"/>
        <end position="241"/>
    </location>
</feature>
<feature type="topological domain" description="Cytoplasmic" evidence="1 2">
    <location>
        <begin position="1"/>
        <end position="15"/>
    </location>
</feature>
<feature type="transmembrane region" description="Helical; Name=1" evidence="2">
    <location>
        <begin position="16"/>
        <end position="36"/>
    </location>
</feature>
<feature type="topological domain" description="Periplasmic" evidence="2">
    <location>
        <begin position="37"/>
        <end position="41"/>
    </location>
</feature>
<feature type="transmembrane region" description="Helical; Name=2" evidence="2">
    <location>
        <begin position="42"/>
        <end position="62"/>
    </location>
</feature>
<feature type="topological domain" description="Cytoplasmic" evidence="2">
    <location>
        <begin position="63"/>
        <end position="76"/>
    </location>
</feature>
<feature type="transmembrane region" description="Helical; Name=3" evidence="2">
    <location>
        <begin position="77"/>
        <end position="97"/>
    </location>
</feature>
<feature type="topological domain" description="Periplasmic" evidence="2">
    <location>
        <begin position="98"/>
        <end position="100"/>
    </location>
</feature>
<feature type="transmembrane region" description="Helical; Name=4" evidence="2">
    <location>
        <begin position="101"/>
        <end position="121"/>
    </location>
</feature>
<feature type="topological domain" description="Cytoplasmic" evidence="2">
    <location>
        <begin position="122"/>
        <end position="133"/>
    </location>
</feature>
<feature type="transmembrane region" description="Helical; Name=5" evidence="2">
    <location>
        <begin position="134"/>
        <end position="154"/>
    </location>
</feature>
<feature type="topological domain" description="Periplasmic" evidence="2">
    <location>
        <begin position="155"/>
        <end position="159"/>
    </location>
</feature>
<feature type="transmembrane region" description="Helical; Name=6" evidence="2">
    <location>
        <begin position="160"/>
        <end position="180"/>
    </location>
</feature>
<feature type="topological domain" description="Cytoplasmic" evidence="2">
    <location>
        <begin position="181"/>
        <end position="187"/>
    </location>
</feature>
<feature type="transmembrane region" description="Helical; Name=7" evidence="2">
    <location>
        <begin position="188"/>
        <end position="208"/>
    </location>
</feature>
<feature type="topological domain" description="Periplasmic" evidence="2">
    <location>
        <begin position="209"/>
        <end position="214"/>
    </location>
</feature>
<feature type="transmembrane region" description="Helical; Name=8" evidence="2">
    <location>
        <begin position="215"/>
        <end position="235"/>
    </location>
</feature>
<feature type="topological domain" description="Cytoplasmic" evidence="1 2">
    <location>
        <begin position="236"/>
        <end position="241"/>
    </location>
</feature>
<evidence type="ECO:0000250" key="1">
    <source>
        <dbReference type="UniProtKB" id="Q9KJY8"/>
    </source>
</evidence>
<evidence type="ECO:0000255" key="2"/>
<evidence type="ECO:0000269" key="3">
    <source>
    </source>
</evidence>
<evidence type="ECO:0000269" key="4">
    <source>
    </source>
</evidence>
<evidence type="ECO:0000269" key="5">
    <source>
    </source>
</evidence>
<evidence type="ECO:0000303" key="6">
    <source>
    </source>
</evidence>
<evidence type="ECO:0000303" key="7">
    <source>
    </source>
</evidence>
<evidence type="ECO:0000303" key="8">
    <source>
    </source>
</evidence>
<evidence type="ECO:0000305" key="9"/>
<evidence type="ECO:0000312" key="10">
    <source>
        <dbReference type="EMBL" id="AAK87563.2"/>
    </source>
</evidence>